<sequence length="177" mass="20447">MDYGYIHLIIGPMFSGKSTELIRIVKRYQIAQYKCCVVKYLKDIRYGNSVYTHDNNHVSAISTTLLYDVVDKIMNFDIIGIDEGQFFKDIVSFSENMANMGKIIIIAALDSTFQRKEFNDILKLIPLSEKVTKLNAVCMECYKDAAFSKRITKEKEIELIGGKEKYKSVCRKCYFLE</sequence>
<accession>P16600</accession>
<reference key="1">
    <citation type="journal article" date="1989" name="J. Gen. Virol.">
        <title>The nucleotide sequence around the capripoxvirus thymidine kinase gene reveals a gene shared specifically with leporipoxvirus.</title>
        <authorList>
            <person name="Gershon P.D."/>
            <person name="Black D.N."/>
        </authorList>
    </citation>
    <scope>NUCLEOTIDE SEQUENCE [GENOMIC DNA]</scope>
</reference>
<organism>
    <name type="scientific">Sheeppox virus (strain KS-1)</name>
    <name type="common">SPPV</name>
    <name type="synonym">Capripoxvirus (strain KS-1)</name>
    <dbReference type="NCBI Taxonomy" id="10269"/>
    <lineage>
        <taxon>Viruses</taxon>
        <taxon>Varidnaviria</taxon>
        <taxon>Bamfordvirae</taxon>
        <taxon>Nucleocytoviricota</taxon>
        <taxon>Pokkesviricetes</taxon>
        <taxon>Chitovirales</taxon>
        <taxon>Poxviridae</taxon>
        <taxon>Chordopoxvirinae</taxon>
        <taxon>Capripoxvirus</taxon>
        <taxon>Sheeppox virus</taxon>
    </lineage>
</organism>
<evidence type="ECO:0000250" key="1"/>
<evidence type="ECO:0000255" key="2"/>
<evidence type="ECO:0000305" key="3"/>
<dbReference type="EC" id="2.7.1.21"/>
<dbReference type="EMBL" id="D00423">
    <property type="protein sequence ID" value="BAA00324.1"/>
    <property type="molecule type" value="Genomic_DNA"/>
</dbReference>
<dbReference type="PIR" id="B31813">
    <property type="entry name" value="KIVZCP"/>
</dbReference>
<dbReference type="SMR" id="P16600"/>
<dbReference type="GO" id="GO:0005524">
    <property type="term" value="F:ATP binding"/>
    <property type="evidence" value="ECO:0007669"/>
    <property type="project" value="UniProtKB-KW"/>
</dbReference>
<dbReference type="GO" id="GO:0046872">
    <property type="term" value="F:metal ion binding"/>
    <property type="evidence" value="ECO:0007669"/>
    <property type="project" value="UniProtKB-KW"/>
</dbReference>
<dbReference type="GO" id="GO:0004797">
    <property type="term" value="F:thymidine kinase activity"/>
    <property type="evidence" value="ECO:0007669"/>
    <property type="project" value="UniProtKB-EC"/>
</dbReference>
<dbReference type="GO" id="GO:0071897">
    <property type="term" value="P:DNA biosynthetic process"/>
    <property type="evidence" value="ECO:0007669"/>
    <property type="project" value="UniProtKB-KW"/>
</dbReference>
<dbReference type="GO" id="GO:0046104">
    <property type="term" value="P:thymidine metabolic process"/>
    <property type="evidence" value="ECO:0007669"/>
    <property type="project" value="TreeGrafter"/>
</dbReference>
<dbReference type="FunFam" id="3.30.60.20:FF:000028">
    <property type="entry name" value="Thymidine kinase"/>
    <property type="match status" value="1"/>
</dbReference>
<dbReference type="FunFam" id="3.40.50.300:FF:001270">
    <property type="entry name" value="Thymidine kinase"/>
    <property type="match status" value="1"/>
</dbReference>
<dbReference type="Gene3D" id="3.30.60.20">
    <property type="match status" value="1"/>
</dbReference>
<dbReference type="Gene3D" id="3.40.50.300">
    <property type="entry name" value="P-loop containing nucleotide triphosphate hydrolases"/>
    <property type="match status" value="1"/>
</dbReference>
<dbReference type="InterPro" id="IPR027417">
    <property type="entry name" value="P-loop_NTPase"/>
</dbReference>
<dbReference type="InterPro" id="IPR001267">
    <property type="entry name" value="Thymidine_kinase"/>
</dbReference>
<dbReference type="InterPro" id="IPR020633">
    <property type="entry name" value="Thymidine_kinase_CS"/>
</dbReference>
<dbReference type="PANTHER" id="PTHR11441">
    <property type="entry name" value="THYMIDINE KINASE"/>
    <property type="match status" value="1"/>
</dbReference>
<dbReference type="PANTHER" id="PTHR11441:SF0">
    <property type="entry name" value="THYMIDINE KINASE, CYTOSOLIC"/>
    <property type="match status" value="1"/>
</dbReference>
<dbReference type="Pfam" id="PF00265">
    <property type="entry name" value="TK"/>
    <property type="match status" value="1"/>
</dbReference>
<dbReference type="PIRSF" id="PIRSF035805">
    <property type="entry name" value="TK_cell"/>
    <property type="match status" value="1"/>
</dbReference>
<dbReference type="SUPFAM" id="SSF57716">
    <property type="entry name" value="Glucocorticoid receptor-like (DNA-binding domain)"/>
    <property type="match status" value="1"/>
</dbReference>
<dbReference type="SUPFAM" id="SSF52540">
    <property type="entry name" value="P-loop containing nucleoside triphosphate hydrolases"/>
    <property type="match status" value="1"/>
</dbReference>
<dbReference type="PROSITE" id="PS00603">
    <property type="entry name" value="TK_CELLULAR_TYPE"/>
    <property type="match status" value="1"/>
</dbReference>
<name>KITH_SHEVK</name>
<comment type="catalytic activity">
    <reaction>
        <text>thymidine + ATP = dTMP + ADP + H(+)</text>
        <dbReference type="Rhea" id="RHEA:19129"/>
        <dbReference type="ChEBI" id="CHEBI:15378"/>
        <dbReference type="ChEBI" id="CHEBI:17748"/>
        <dbReference type="ChEBI" id="CHEBI:30616"/>
        <dbReference type="ChEBI" id="CHEBI:63528"/>
        <dbReference type="ChEBI" id="CHEBI:456216"/>
        <dbReference type="EC" id="2.7.1.21"/>
    </reaction>
</comment>
<comment type="similarity">
    <text evidence="3">Belongs to the thymidine kinase family.</text>
</comment>
<proteinExistence type="inferred from homology"/>
<protein>
    <recommendedName>
        <fullName>Thymidine kinase</fullName>
        <ecNumber>2.7.1.21</ecNumber>
    </recommendedName>
</protein>
<keyword id="KW-0067">ATP-binding</keyword>
<keyword id="KW-0237">DNA synthesis</keyword>
<keyword id="KW-0418">Kinase</keyword>
<keyword id="KW-0479">Metal-binding</keyword>
<keyword id="KW-0547">Nucleotide-binding</keyword>
<keyword id="KW-0808">Transferase</keyword>
<keyword id="KW-0862">Zinc</keyword>
<organismHost>
    <name type="scientific">Ovis aries</name>
    <name type="common">Sheep</name>
    <dbReference type="NCBI Taxonomy" id="9940"/>
</organismHost>
<feature type="chain" id="PRO_0000174929" description="Thymidine kinase">
    <location>
        <begin position="1"/>
        <end position="177"/>
    </location>
</feature>
<feature type="active site" description="Proton acceptor" evidence="2">
    <location>
        <position position="83"/>
    </location>
</feature>
<feature type="binding site" evidence="1">
    <location>
        <begin position="11"/>
        <end position="18"/>
    </location>
    <ligand>
        <name>ATP</name>
        <dbReference type="ChEBI" id="CHEBI:30616"/>
    </ligand>
</feature>
<feature type="binding site" evidence="1">
    <location>
        <position position="113"/>
    </location>
    <ligand>
        <name>substrate</name>
    </ligand>
</feature>
<feature type="binding site" evidence="1">
    <location>
        <position position="138"/>
    </location>
    <ligand>
        <name>Zn(2+)</name>
        <dbReference type="ChEBI" id="CHEBI:29105"/>
    </ligand>
</feature>
<feature type="binding site" evidence="1">
    <location>
        <position position="141"/>
    </location>
    <ligand>
        <name>Zn(2+)</name>
        <dbReference type="ChEBI" id="CHEBI:29105"/>
    </ligand>
</feature>
<feature type="binding site" evidence="1">
    <location>
        <begin position="157"/>
        <end position="161"/>
    </location>
    <ligand>
        <name>substrate</name>
    </ligand>
</feature>
<feature type="binding site" evidence="1">
    <location>
        <position position="170"/>
    </location>
    <ligand>
        <name>Zn(2+)</name>
        <dbReference type="ChEBI" id="CHEBI:29105"/>
    </ligand>
</feature>
<feature type="binding site" evidence="1">
    <location>
        <position position="173"/>
    </location>
    <ligand>
        <name>Zn(2+)</name>
        <dbReference type="ChEBI" id="CHEBI:29105"/>
    </ligand>
</feature>
<gene>
    <name type="primary">TK</name>
</gene>